<comment type="function">
    <text evidence="1">Carrier of the growing fatty acid chain in fatty acid biosynthesis.</text>
</comment>
<comment type="pathway">
    <text evidence="1">Lipid metabolism; fatty acid biosynthesis.</text>
</comment>
<comment type="subcellular location">
    <subcellularLocation>
        <location evidence="1">Cytoplasm</location>
    </subcellularLocation>
</comment>
<comment type="PTM">
    <text evidence="1">4'-phosphopantetheine is transferred from CoA to a specific serine of apo-ACP by AcpS. This modification is essential for activity because fatty acids are bound in thioester linkage to the sulfhydryl of the prosthetic group.</text>
</comment>
<comment type="similarity">
    <text evidence="1">Belongs to the acyl carrier protein (ACP) family.</text>
</comment>
<keyword id="KW-0963">Cytoplasm</keyword>
<keyword id="KW-0275">Fatty acid biosynthesis</keyword>
<keyword id="KW-0276">Fatty acid metabolism</keyword>
<keyword id="KW-0444">Lipid biosynthesis</keyword>
<keyword id="KW-0443">Lipid metabolism</keyword>
<keyword id="KW-0596">Phosphopantetheine</keyword>
<keyword id="KW-0597">Phosphoprotein</keyword>
<proteinExistence type="inferred from homology"/>
<feature type="chain" id="PRO_1000066628" description="Acyl carrier protein">
    <location>
        <begin position="1"/>
        <end position="78"/>
    </location>
</feature>
<feature type="domain" description="Carrier" evidence="2">
    <location>
        <begin position="2"/>
        <end position="77"/>
    </location>
</feature>
<feature type="modified residue" description="O-(pantetheine 4'-phosphoryl)serine" evidence="2">
    <location>
        <position position="37"/>
    </location>
</feature>
<accession>A6T7F4</accession>
<evidence type="ECO:0000255" key="1">
    <source>
        <dbReference type="HAMAP-Rule" id="MF_01217"/>
    </source>
</evidence>
<evidence type="ECO:0000255" key="2">
    <source>
        <dbReference type="PROSITE-ProRule" id="PRU00258"/>
    </source>
</evidence>
<protein>
    <recommendedName>
        <fullName evidence="1">Acyl carrier protein</fullName>
        <shortName evidence="1">ACP</shortName>
    </recommendedName>
</protein>
<organism>
    <name type="scientific">Klebsiella pneumoniae subsp. pneumoniae (strain ATCC 700721 / MGH 78578)</name>
    <dbReference type="NCBI Taxonomy" id="272620"/>
    <lineage>
        <taxon>Bacteria</taxon>
        <taxon>Pseudomonadati</taxon>
        <taxon>Pseudomonadota</taxon>
        <taxon>Gammaproteobacteria</taxon>
        <taxon>Enterobacterales</taxon>
        <taxon>Enterobacteriaceae</taxon>
        <taxon>Klebsiella/Raoultella group</taxon>
        <taxon>Klebsiella</taxon>
        <taxon>Klebsiella pneumoniae complex</taxon>
    </lineage>
</organism>
<reference key="1">
    <citation type="submission" date="2006-09" db="EMBL/GenBank/DDBJ databases">
        <authorList>
            <consortium name="The Klebsiella pneumonia Genome Sequencing Project"/>
            <person name="McClelland M."/>
            <person name="Sanderson E.K."/>
            <person name="Spieth J."/>
            <person name="Clifton W.S."/>
            <person name="Latreille P."/>
            <person name="Sabo A."/>
            <person name="Pepin K."/>
            <person name="Bhonagiri V."/>
            <person name="Porwollik S."/>
            <person name="Ali J."/>
            <person name="Wilson R.K."/>
        </authorList>
    </citation>
    <scope>NUCLEOTIDE SEQUENCE [LARGE SCALE GENOMIC DNA]</scope>
    <source>
        <strain>ATCC 700721 / MGH 78578</strain>
    </source>
</reference>
<dbReference type="EMBL" id="CP000647">
    <property type="protein sequence ID" value="ABR76525.1"/>
    <property type="molecule type" value="Genomic_DNA"/>
</dbReference>
<dbReference type="RefSeq" id="WP_000103754.1">
    <property type="nucleotide sequence ID" value="NC_009648.1"/>
</dbReference>
<dbReference type="BMRB" id="A6T7F4"/>
<dbReference type="SMR" id="A6T7F4"/>
<dbReference type="STRING" id="272620.KPN_01092"/>
<dbReference type="jPOST" id="A6T7F4"/>
<dbReference type="PaxDb" id="272620-KPN_01092"/>
<dbReference type="EnsemblBacteria" id="ABR76525">
    <property type="protein sequence ID" value="ABR76525"/>
    <property type="gene ID" value="KPN_01092"/>
</dbReference>
<dbReference type="GeneID" id="98387866"/>
<dbReference type="KEGG" id="kpn:KPN_01092"/>
<dbReference type="HOGENOM" id="CLU_108696_5_1_6"/>
<dbReference type="UniPathway" id="UPA00094"/>
<dbReference type="Proteomes" id="UP000000265">
    <property type="component" value="Chromosome"/>
</dbReference>
<dbReference type="GO" id="GO:0005829">
    <property type="term" value="C:cytosol"/>
    <property type="evidence" value="ECO:0007669"/>
    <property type="project" value="TreeGrafter"/>
</dbReference>
<dbReference type="GO" id="GO:0016020">
    <property type="term" value="C:membrane"/>
    <property type="evidence" value="ECO:0007669"/>
    <property type="project" value="GOC"/>
</dbReference>
<dbReference type="GO" id="GO:0000035">
    <property type="term" value="F:acyl binding"/>
    <property type="evidence" value="ECO:0007669"/>
    <property type="project" value="TreeGrafter"/>
</dbReference>
<dbReference type="GO" id="GO:0000036">
    <property type="term" value="F:acyl carrier activity"/>
    <property type="evidence" value="ECO:0007669"/>
    <property type="project" value="UniProtKB-UniRule"/>
</dbReference>
<dbReference type="GO" id="GO:0009245">
    <property type="term" value="P:lipid A biosynthetic process"/>
    <property type="evidence" value="ECO:0007669"/>
    <property type="project" value="TreeGrafter"/>
</dbReference>
<dbReference type="FunFam" id="1.10.1200.10:FF:000001">
    <property type="entry name" value="Acyl carrier protein"/>
    <property type="match status" value="1"/>
</dbReference>
<dbReference type="Gene3D" id="1.10.1200.10">
    <property type="entry name" value="ACP-like"/>
    <property type="match status" value="1"/>
</dbReference>
<dbReference type="HAMAP" id="MF_01217">
    <property type="entry name" value="Acyl_carrier"/>
    <property type="match status" value="1"/>
</dbReference>
<dbReference type="InterPro" id="IPR003231">
    <property type="entry name" value="ACP"/>
</dbReference>
<dbReference type="InterPro" id="IPR036736">
    <property type="entry name" value="ACP-like_sf"/>
</dbReference>
<dbReference type="InterPro" id="IPR009081">
    <property type="entry name" value="PP-bd_ACP"/>
</dbReference>
<dbReference type="InterPro" id="IPR006162">
    <property type="entry name" value="Ppantetheine_attach_site"/>
</dbReference>
<dbReference type="NCBIfam" id="TIGR00517">
    <property type="entry name" value="acyl_carrier"/>
    <property type="match status" value="1"/>
</dbReference>
<dbReference type="NCBIfam" id="NF002148">
    <property type="entry name" value="PRK00982.1-2"/>
    <property type="match status" value="1"/>
</dbReference>
<dbReference type="NCBIfam" id="NF002149">
    <property type="entry name" value="PRK00982.1-3"/>
    <property type="match status" value="1"/>
</dbReference>
<dbReference type="NCBIfam" id="NF002150">
    <property type="entry name" value="PRK00982.1-4"/>
    <property type="match status" value="1"/>
</dbReference>
<dbReference type="NCBIfam" id="NF002151">
    <property type="entry name" value="PRK00982.1-5"/>
    <property type="match status" value="1"/>
</dbReference>
<dbReference type="PANTHER" id="PTHR20863">
    <property type="entry name" value="ACYL CARRIER PROTEIN"/>
    <property type="match status" value="1"/>
</dbReference>
<dbReference type="PANTHER" id="PTHR20863:SF76">
    <property type="entry name" value="CARRIER DOMAIN-CONTAINING PROTEIN"/>
    <property type="match status" value="1"/>
</dbReference>
<dbReference type="Pfam" id="PF00550">
    <property type="entry name" value="PP-binding"/>
    <property type="match status" value="1"/>
</dbReference>
<dbReference type="SUPFAM" id="SSF47336">
    <property type="entry name" value="ACP-like"/>
    <property type="match status" value="1"/>
</dbReference>
<dbReference type="PROSITE" id="PS50075">
    <property type="entry name" value="CARRIER"/>
    <property type="match status" value="1"/>
</dbReference>
<dbReference type="PROSITE" id="PS00012">
    <property type="entry name" value="PHOSPHOPANTETHEINE"/>
    <property type="match status" value="1"/>
</dbReference>
<sequence length="78" mass="8640">MSTIEERVKKIIGEQLGVKQEEVTNNASFVEDLGADSLDTVELVMALEEEFDTEIPDEEAEKITTVQAAIDYINGHQA</sequence>
<name>ACP_KLEP7</name>
<gene>
    <name evidence="1" type="primary">acpP</name>
    <name type="ordered locus">KPN78578_10640</name>
    <name type="ORF">KPN_01092</name>
</gene>